<keyword id="KW-0479">Metal-binding</keyword>
<keyword id="KW-0687">Ribonucleoprotein</keyword>
<keyword id="KW-0689">Ribosomal protein</keyword>
<keyword id="KW-0862">Zinc</keyword>
<keyword id="KW-0863">Zinc-finger</keyword>
<dbReference type="EMBL" id="BA000011">
    <property type="protein sequence ID" value="BAB59556.1"/>
    <property type="molecule type" value="Genomic_DNA"/>
</dbReference>
<dbReference type="RefSeq" id="WP_010916671.1">
    <property type="nucleotide sequence ID" value="NC_002689.2"/>
</dbReference>
<dbReference type="SMR" id="Q97BP1"/>
<dbReference type="STRING" id="273116.gene:9381192"/>
<dbReference type="PaxDb" id="273116-14324629"/>
<dbReference type="GeneID" id="1440929"/>
<dbReference type="KEGG" id="tvo:TVG0402231"/>
<dbReference type="eggNOG" id="arCOG04108">
    <property type="taxonomic scope" value="Archaea"/>
</dbReference>
<dbReference type="HOGENOM" id="CLU_199465_0_0_2"/>
<dbReference type="OrthoDB" id="5718at2157"/>
<dbReference type="PhylomeDB" id="Q97BP1"/>
<dbReference type="Proteomes" id="UP000001017">
    <property type="component" value="Chromosome"/>
</dbReference>
<dbReference type="GO" id="GO:1990904">
    <property type="term" value="C:ribonucleoprotein complex"/>
    <property type="evidence" value="ECO:0007669"/>
    <property type="project" value="UniProtKB-KW"/>
</dbReference>
<dbReference type="GO" id="GO:0005840">
    <property type="term" value="C:ribosome"/>
    <property type="evidence" value="ECO:0007669"/>
    <property type="project" value="UniProtKB-KW"/>
</dbReference>
<dbReference type="GO" id="GO:0003735">
    <property type="term" value="F:structural constituent of ribosome"/>
    <property type="evidence" value="ECO:0007669"/>
    <property type="project" value="InterPro"/>
</dbReference>
<dbReference type="GO" id="GO:0008270">
    <property type="term" value="F:zinc ion binding"/>
    <property type="evidence" value="ECO:0007669"/>
    <property type="project" value="UniProtKB-UniRule"/>
</dbReference>
<dbReference type="GO" id="GO:0006412">
    <property type="term" value="P:translation"/>
    <property type="evidence" value="ECO:0007669"/>
    <property type="project" value="UniProtKB-UniRule"/>
</dbReference>
<dbReference type="Gene3D" id="2.20.25.100">
    <property type="entry name" value="Zn-binding ribosomal proteins"/>
    <property type="match status" value="1"/>
</dbReference>
<dbReference type="HAMAP" id="MF_00371">
    <property type="entry name" value="Ribosomal_eS27"/>
    <property type="match status" value="1"/>
</dbReference>
<dbReference type="InterPro" id="IPR000592">
    <property type="entry name" value="Ribosomal_eS27"/>
</dbReference>
<dbReference type="InterPro" id="IPR023407">
    <property type="entry name" value="Ribosomal_eS27_Zn-bd_dom_sf"/>
</dbReference>
<dbReference type="InterPro" id="IPR011332">
    <property type="entry name" value="Ribosomal_zn-bd"/>
</dbReference>
<dbReference type="NCBIfam" id="NF001629">
    <property type="entry name" value="PRK00415.1"/>
    <property type="match status" value="1"/>
</dbReference>
<dbReference type="Pfam" id="PF01667">
    <property type="entry name" value="Ribosomal_S27e"/>
    <property type="match status" value="1"/>
</dbReference>
<dbReference type="SUPFAM" id="SSF57829">
    <property type="entry name" value="Zn-binding ribosomal proteins"/>
    <property type="match status" value="1"/>
</dbReference>
<dbReference type="PROSITE" id="PS01168">
    <property type="entry name" value="RIBOSOMAL_S27E"/>
    <property type="match status" value="1"/>
</dbReference>
<proteinExistence type="inferred from homology"/>
<name>RS27_THEVO</name>
<evidence type="ECO:0000255" key="1">
    <source>
        <dbReference type="HAMAP-Rule" id="MF_00371"/>
    </source>
</evidence>
<gene>
    <name evidence="1" type="primary">rps27e</name>
    <name type="ordered locus">TV0414</name>
    <name type="ORF">TVG0402231</name>
</gene>
<organism>
    <name type="scientific">Thermoplasma volcanium (strain ATCC 51530 / DSM 4299 / JCM 9571 / NBRC 15438 / GSS1)</name>
    <dbReference type="NCBI Taxonomy" id="273116"/>
    <lineage>
        <taxon>Archaea</taxon>
        <taxon>Methanobacteriati</taxon>
        <taxon>Thermoplasmatota</taxon>
        <taxon>Thermoplasmata</taxon>
        <taxon>Thermoplasmatales</taxon>
        <taxon>Thermoplasmataceae</taxon>
        <taxon>Thermoplasma</taxon>
    </lineage>
</organism>
<protein>
    <recommendedName>
        <fullName evidence="1">Small ribosomal subunit protein eS27</fullName>
    </recommendedName>
</protein>
<accession>Q97BP1</accession>
<comment type="cofactor">
    <cofactor evidence="1">
        <name>Zn(2+)</name>
        <dbReference type="ChEBI" id="CHEBI:29105"/>
    </cofactor>
    <text evidence="1">Binds 1 zinc ion per subunit.</text>
</comment>
<comment type="subunit">
    <text evidence="1">Part of the 30S ribosomal subunit.</text>
</comment>
<comment type="similarity">
    <text evidence="1">Belongs to the eukaryotic ribosomal protein eS27 family.</text>
</comment>
<feature type="chain" id="PRO_0000149085" description="Small ribosomal subunit protein eS27">
    <location>
        <begin position="1"/>
        <end position="65"/>
    </location>
</feature>
<feature type="zinc finger region" description="C4-type" evidence="1">
    <location>
        <begin position="21"/>
        <end position="43"/>
    </location>
</feature>
<feature type="binding site" evidence="1">
    <location>
        <position position="21"/>
    </location>
    <ligand>
        <name>Zn(2+)</name>
        <dbReference type="ChEBI" id="CHEBI:29105"/>
    </ligand>
</feature>
<feature type="binding site" evidence="1">
    <location>
        <position position="24"/>
    </location>
    <ligand>
        <name>Zn(2+)</name>
        <dbReference type="ChEBI" id="CHEBI:29105"/>
    </ligand>
</feature>
<feature type="binding site" evidence="1">
    <location>
        <position position="40"/>
    </location>
    <ligand>
        <name>Zn(2+)</name>
        <dbReference type="ChEBI" id="CHEBI:29105"/>
    </ligand>
</feature>
<feature type="binding site" evidence="1">
    <location>
        <position position="43"/>
    </location>
    <ligand>
        <name>Zn(2+)</name>
        <dbReference type="ChEBI" id="CHEBI:29105"/>
    </ligand>
</feature>
<sequence length="65" mass="6853">MSEVKFVKPKNVSGHFLKIKCKDCGNVQVVFARPSSVVTCNICGATIAKPTGGVLETSGEVIESL</sequence>
<reference key="1">
    <citation type="journal article" date="2000" name="Proc. Natl. Acad. Sci. U.S.A.">
        <title>Archaeal adaptation to higher temperatures revealed by genomic sequence of Thermoplasma volcanium.</title>
        <authorList>
            <person name="Kawashima T."/>
            <person name="Amano N."/>
            <person name="Koike H."/>
            <person name="Makino S."/>
            <person name="Higuchi S."/>
            <person name="Kawashima-Ohya Y."/>
            <person name="Watanabe K."/>
            <person name="Yamazaki M."/>
            <person name="Kanehori K."/>
            <person name="Kawamoto T."/>
            <person name="Nunoshiba T."/>
            <person name="Yamamoto Y."/>
            <person name="Aramaki H."/>
            <person name="Makino K."/>
            <person name="Suzuki M."/>
        </authorList>
    </citation>
    <scope>NUCLEOTIDE SEQUENCE [LARGE SCALE GENOMIC DNA]</scope>
    <source>
        <strain>ATCC 51530 / DSM 4299 / JCM 9571 / NBRC 15438 / GSS1</strain>
    </source>
</reference>